<protein>
    <recommendedName>
        <fullName evidence="1">Chaperonin GroEL</fullName>
        <ecNumber evidence="1">5.6.1.7</ecNumber>
    </recommendedName>
    <alternativeName>
        <fullName evidence="1">60 kDa chaperonin</fullName>
    </alternativeName>
    <alternativeName>
        <fullName evidence="1">Chaperonin-60</fullName>
        <shortName evidence="1">Cpn60</shortName>
    </alternativeName>
</protein>
<organism>
    <name type="scientific">Salmonella paratyphi A (strain ATCC 9150 / SARB42)</name>
    <dbReference type="NCBI Taxonomy" id="295319"/>
    <lineage>
        <taxon>Bacteria</taxon>
        <taxon>Pseudomonadati</taxon>
        <taxon>Pseudomonadota</taxon>
        <taxon>Gammaproteobacteria</taxon>
        <taxon>Enterobacterales</taxon>
        <taxon>Enterobacteriaceae</taxon>
        <taxon>Salmonella</taxon>
    </lineage>
</organism>
<proteinExistence type="inferred from homology"/>
<evidence type="ECO:0000255" key="1">
    <source>
        <dbReference type="HAMAP-Rule" id="MF_00600"/>
    </source>
</evidence>
<feature type="chain" id="PRO_0000063520" description="Chaperonin GroEL">
    <location>
        <begin position="1"/>
        <end position="548"/>
    </location>
</feature>
<feature type="binding site" evidence="1">
    <location>
        <begin position="30"/>
        <end position="33"/>
    </location>
    <ligand>
        <name>ATP</name>
        <dbReference type="ChEBI" id="CHEBI:30616"/>
    </ligand>
</feature>
<feature type="binding site" evidence="1">
    <location>
        <position position="51"/>
    </location>
    <ligand>
        <name>ATP</name>
        <dbReference type="ChEBI" id="CHEBI:30616"/>
    </ligand>
</feature>
<feature type="binding site" evidence="1">
    <location>
        <begin position="87"/>
        <end position="91"/>
    </location>
    <ligand>
        <name>ATP</name>
        <dbReference type="ChEBI" id="CHEBI:30616"/>
    </ligand>
</feature>
<feature type="binding site" evidence="1">
    <location>
        <position position="415"/>
    </location>
    <ligand>
        <name>ATP</name>
        <dbReference type="ChEBI" id="CHEBI:30616"/>
    </ligand>
</feature>
<feature type="binding site" evidence="1">
    <location>
        <begin position="479"/>
        <end position="481"/>
    </location>
    <ligand>
        <name>ATP</name>
        <dbReference type="ChEBI" id="CHEBI:30616"/>
    </ligand>
</feature>
<feature type="binding site" evidence="1">
    <location>
        <position position="495"/>
    </location>
    <ligand>
        <name>ATP</name>
        <dbReference type="ChEBI" id="CHEBI:30616"/>
    </ligand>
</feature>
<comment type="function">
    <text evidence="1">Together with its co-chaperonin GroES, plays an essential role in assisting protein folding. The GroEL-GroES system forms a nano-cage that allows encapsulation of the non-native substrate proteins and provides a physical environment optimized to promote and accelerate protein folding.</text>
</comment>
<comment type="catalytic activity">
    <reaction evidence="1">
        <text>ATP + H2O + a folded polypeptide = ADP + phosphate + an unfolded polypeptide.</text>
        <dbReference type="EC" id="5.6.1.7"/>
    </reaction>
</comment>
<comment type="subunit">
    <text evidence="1">Forms a cylinder of 14 subunits composed of two heptameric rings stacked back-to-back. Interacts with the co-chaperonin GroES.</text>
</comment>
<comment type="subcellular location">
    <subcellularLocation>
        <location evidence="1">Cytoplasm</location>
    </subcellularLocation>
</comment>
<comment type="similarity">
    <text evidence="1">Belongs to the chaperonin (HSP60) family.</text>
</comment>
<keyword id="KW-0067">ATP-binding</keyword>
<keyword id="KW-0143">Chaperone</keyword>
<keyword id="KW-0963">Cytoplasm</keyword>
<keyword id="KW-0413">Isomerase</keyword>
<keyword id="KW-0547">Nucleotide-binding</keyword>
<accession>Q5PL62</accession>
<gene>
    <name evidence="1" type="primary">groEL</name>
    <name evidence="1" type="synonym">groL</name>
    <name type="ordered locus">SPA4147</name>
</gene>
<dbReference type="EC" id="5.6.1.7" evidence="1"/>
<dbReference type="EMBL" id="CP000026">
    <property type="protein sequence ID" value="AAV79888.1"/>
    <property type="molecule type" value="Genomic_DNA"/>
</dbReference>
<dbReference type="RefSeq" id="WP_000729126.1">
    <property type="nucleotide sequence ID" value="NC_006511.1"/>
</dbReference>
<dbReference type="SMR" id="Q5PL62"/>
<dbReference type="KEGG" id="spt:SPA4147"/>
<dbReference type="HOGENOM" id="CLU_016503_3_0_6"/>
<dbReference type="Proteomes" id="UP000008185">
    <property type="component" value="Chromosome"/>
</dbReference>
<dbReference type="GO" id="GO:0005737">
    <property type="term" value="C:cytoplasm"/>
    <property type="evidence" value="ECO:0007669"/>
    <property type="project" value="UniProtKB-SubCell"/>
</dbReference>
<dbReference type="GO" id="GO:0005524">
    <property type="term" value="F:ATP binding"/>
    <property type="evidence" value="ECO:0007669"/>
    <property type="project" value="UniProtKB-UniRule"/>
</dbReference>
<dbReference type="GO" id="GO:0140662">
    <property type="term" value="F:ATP-dependent protein folding chaperone"/>
    <property type="evidence" value="ECO:0007669"/>
    <property type="project" value="InterPro"/>
</dbReference>
<dbReference type="GO" id="GO:0016853">
    <property type="term" value="F:isomerase activity"/>
    <property type="evidence" value="ECO:0007669"/>
    <property type="project" value="UniProtKB-KW"/>
</dbReference>
<dbReference type="GO" id="GO:0051082">
    <property type="term" value="F:unfolded protein binding"/>
    <property type="evidence" value="ECO:0007669"/>
    <property type="project" value="UniProtKB-UniRule"/>
</dbReference>
<dbReference type="GO" id="GO:0042026">
    <property type="term" value="P:protein refolding"/>
    <property type="evidence" value="ECO:0007669"/>
    <property type="project" value="UniProtKB-UniRule"/>
</dbReference>
<dbReference type="CDD" id="cd03344">
    <property type="entry name" value="GroEL"/>
    <property type="match status" value="1"/>
</dbReference>
<dbReference type="FunFam" id="1.10.560.10:FF:000001">
    <property type="entry name" value="60 kDa chaperonin"/>
    <property type="match status" value="1"/>
</dbReference>
<dbReference type="FunFam" id="3.50.7.10:FF:000001">
    <property type="entry name" value="60 kDa chaperonin"/>
    <property type="match status" value="1"/>
</dbReference>
<dbReference type="Gene3D" id="3.50.7.10">
    <property type="entry name" value="GroEL"/>
    <property type="match status" value="1"/>
</dbReference>
<dbReference type="Gene3D" id="1.10.560.10">
    <property type="entry name" value="GroEL-like equatorial domain"/>
    <property type="match status" value="1"/>
</dbReference>
<dbReference type="Gene3D" id="3.30.260.10">
    <property type="entry name" value="TCP-1-like chaperonin intermediate domain"/>
    <property type="match status" value="1"/>
</dbReference>
<dbReference type="HAMAP" id="MF_00600">
    <property type="entry name" value="CH60"/>
    <property type="match status" value="1"/>
</dbReference>
<dbReference type="InterPro" id="IPR018370">
    <property type="entry name" value="Chaperonin_Cpn60_CS"/>
</dbReference>
<dbReference type="InterPro" id="IPR001844">
    <property type="entry name" value="Cpn60/GroEL"/>
</dbReference>
<dbReference type="InterPro" id="IPR002423">
    <property type="entry name" value="Cpn60/GroEL/TCP-1"/>
</dbReference>
<dbReference type="InterPro" id="IPR027409">
    <property type="entry name" value="GroEL-like_apical_dom_sf"/>
</dbReference>
<dbReference type="InterPro" id="IPR027413">
    <property type="entry name" value="GROEL-like_equatorial_sf"/>
</dbReference>
<dbReference type="InterPro" id="IPR027410">
    <property type="entry name" value="TCP-1-like_intermed_sf"/>
</dbReference>
<dbReference type="NCBIfam" id="TIGR02348">
    <property type="entry name" value="GroEL"/>
    <property type="match status" value="1"/>
</dbReference>
<dbReference type="NCBIfam" id="NF000592">
    <property type="entry name" value="PRK00013.1"/>
    <property type="match status" value="1"/>
</dbReference>
<dbReference type="NCBIfam" id="NF009487">
    <property type="entry name" value="PRK12849.1"/>
    <property type="match status" value="1"/>
</dbReference>
<dbReference type="NCBIfam" id="NF009488">
    <property type="entry name" value="PRK12850.1"/>
    <property type="match status" value="1"/>
</dbReference>
<dbReference type="NCBIfam" id="NF009489">
    <property type="entry name" value="PRK12851.1"/>
    <property type="match status" value="1"/>
</dbReference>
<dbReference type="PANTHER" id="PTHR45633">
    <property type="entry name" value="60 KDA HEAT SHOCK PROTEIN, MITOCHONDRIAL"/>
    <property type="match status" value="1"/>
</dbReference>
<dbReference type="Pfam" id="PF00118">
    <property type="entry name" value="Cpn60_TCP1"/>
    <property type="match status" value="1"/>
</dbReference>
<dbReference type="PRINTS" id="PR00298">
    <property type="entry name" value="CHAPERONIN60"/>
</dbReference>
<dbReference type="SUPFAM" id="SSF52029">
    <property type="entry name" value="GroEL apical domain-like"/>
    <property type="match status" value="1"/>
</dbReference>
<dbReference type="SUPFAM" id="SSF48592">
    <property type="entry name" value="GroEL equatorial domain-like"/>
    <property type="match status" value="1"/>
</dbReference>
<dbReference type="SUPFAM" id="SSF54849">
    <property type="entry name" value="GroEL-intermediate domain like"/>
    <property type="match status" value="1"/>
</dbReference>
<dbReference type="PROSITE" id="PS00296">
    <property type="entry name" value="CHAPERONINS_CPN60"/>
    <property type="match status" value="1"/>
</dbReference>
<sequence>MAAKDVKFGNDARVKMLRGVNVLADAVKVTLGPKGRNVVLDKSFGAPTITKDGVSVAREIELEDKFENMGAQMVKEVASKANDAAGDGTTTATVLAQSIITEGLKAVAAGMNPMDLKRGIDKAVAAAVEELKALSVPCSDSKAIAQVGTISANSDETVGKLIAEAMDKVGKEGVITVEDGTGLQDELDVVEGMQFDRGYLSPYFINKPETGAVELESPFILLADKKISNIREMLPVLEAVAKAGKPLLIIAEDVEGEALATLVVNTMRGIVKVAAVKAPGFGDRRKAMLQDIATLTGGTVISEEIGMELEKATLEDLGQAKRVVINKDTTTIIDGVGEEAAIQGRVAQIRQQIEEATSDYDREKLQERVAKLAGGVAVIKVGAATEVEMKEKKARVEDALHATRAAVEEGVVAGGGVALIRVASKIADLKGQNEDQNVGIKVALRAMEAPLRQIVLNCGEEPSVVANTVKGGDGNYGYNAATEEYGNMIDMGILDPTKVTRSALQYAASVAGLMITTECMVTDLPKSDAPDLGAAGGMGGMGGMGGMM</sequence>
<reference key="1">
    <citation type="journal article" date="2004" name="Nat. Genet.">
        <title>Comparison of genome degradation in Paratyphi A and Typhi, human-restricted serovars of Salmonella enterica that cause typhoid.</title>
        <authorList>
            <person name="McClelland M."/>
            <person name="Sanderson K.E."/>
            <person name="Clifton S.W."/>
            <person name="Latreille P."/>
            <person name="Porwollik S."/>
            <person name="Sabo A."/>
            <person name="Meyer R."/>
            <person name="Bieri T."/>
            <person name="Ozersky P."/>
            <person name="McLellan M."/>
            <person name="Harkins C.R."/>
            <person name="Wang C."/>
            <person name="Nguyen C."/>
            <person name="Berghoff A."/>
            <person name="Elliott G."/>
            <person name="Kohlberg S."/>
            <person name="Strong C."/>
            <person name="Du F."/>
            <person name="Carter J."/>
            <person name="Kremizki C."/>
            <person name="Layman D."/>
            <person name="Leonard S."/>
            <person name="Sun H."/>
            <person name="Fulton L."/>
            <person name="Nash W."/>
            <person name="Miner T."/>
            <person name="Minx P."/>
            <person name="Delehaunty K."/>
            <person name="Fronick C."/>
            <person name="Magrini V."/>
            <person name="Nhan M."/>
            <person name="Warren W."/>
            <person name="Florea L."/>
            <person name="Spieth J."/>
            <person name="Wilson R.K."/>
        </authorList>
    </citation>
    <scope>NUCLEOTIDE SEQUENCE [LARGE SCALE GENOMIC DNA]</scope>
    <source>
        <strain>ATCC 9150 / SARB42</strain>
    </source>
</reference>
<name>CH60_SALPA</name>